<sequence>MPLPPSTLNQKSNRVYSVARVYKNACEERPQEYWDYEQGVTIDWGKISNYEIINKIGRGKYSEVFSGRCIVNNQKCVIKVLKPVKMKKIYRELKILTNLTGGPNVVGLYDIVQDADSKIPALIFEEIKNVDFRTLYPTFKLPDIQYYFTQLLIALDYCHSMGIMHRDVKPQNVMIDPTERKLRLIDWGLAEFYHPGVDYNVRVASRYHKGPELLVNLNQYDYSLDLWSVGCMLAAIVFKKEPFFKGSSNPDQLVKIATVLGTKELLGYLGKYGLHLPSEYDNIMRDFTKKSWTHFITSETKLAVPEVVDLIDNLLRYDHQERLTAKEAMDHKFFKTKFE</sequence>
<feature type="initiator methionine" description="Removed" evidence="8">
    <location>
        <position position="1"/>
    </location>
</feature>
<feature type="chain" id="PRO_0000085896" description="Casein kinase II subunit alpha'">
    <location>
        <begin position="2"/>
        <end position="339"/>
    </location>
</feature>
<feature type="domain" description="Protein kinase" evidence="2">
    <location>
        <begin position="50"/>
        <end position="334"/>
    </location>
</feature>
<feature type="active site" description="Proton acceptor" evidence="2 3">
    <location>
        <position position="167"/>
    </location>
</feature>
<feature type="binding site" evidence="2">
    <location>
        <begin position="56"/>
        <end position="64"/>
    </location>
    <ligand>
        <name>ATP</name>
        <dbReference type="ChEBI" id="CHEBI:30616"/>
    </ligand>
</feature>
<feature type="binding site" evidence="2">
    <location>
        <position position="79"/>
    </location>
    <ligand>
        <name>ATP</name>
        <dbReference type="ChEBI" id="CHEBI:30616"/>
    </ligand>
</feature>
<reference key="1">
    <citation type="journal article" date="1990" name="Mol. Cell. Biol.">
        <title>Isolation, sequencing, and disruption of the yeast CKA2 gene: casein kinase II is essential for viability in Saccharomyces cerevisiae.</title>
        <authorList>
            <person name="Padmanabha R."/>
            <person name="Chen-Wu J.L.-P."/>
            <person name="Hanna D.E."/>
            <person name="Glover C.V.C."/>
        </authorList>
    </citation>
    <scope>NUCLEOTIDE SEQUENCE [GENOMIC DNA]</scope>
</reference>
<reference key="2">
    <citation type="journal article" date="1997" name="Yeast">
        <title>The sequence of a 54.7 kb fragment of yeast chromosome XV reveals the presence of two tRNAs and 24 new open reading frames.</title>
        <authorList>
            <person name="Valens M."/>
            <person name="Bohn C."/>
            <person name="Daignan-Fornier B."/>
            <person name="Dang V.-D."/>
            <person name="Bolotin-Fukuhara M."/>
        </authorList>
    </citation>
    <scope>NUCLEOTIDE SEQUENCE [GENOMIC DNA]</scope>
</reference>
<reference key="3">
    <citation type="journal article" date="1997" name="Nature">
        <title>The nucleotide sequence of Saccharomyces cerevisiae chromosome XV.</title>
        <authorList>
            <person name="Dujon B."/>
            <person name="Albermann K."/>
            <person name="Aldea M."/>
            <person name="Alexandraki D."/>
            <person name="Ansorge W."/>
            <person name="Arino J."/>
            <person name="Benes V."/>
            <person name="Bohn C."/>
            <person name="Bolotin-Fukuhara M."/>
            <person name="Bordonne R."/>
            <person name="Boyer J."/>
            <person name="Camasses A."/>
            <person name="Casamayor A."/>
            <person name="Casas C."/>
            <person name="Cheret G."/>
            <person name="Cziepluch C."/>
            <person name="Daignan-Fornier B."/>
            <person name="Dang V.-D."/>
            <person name="de Haan M."/>
            <person name="Delius H."/>
            <person name="Durand P."/>
            <person name="Fairhead C."/>
            <person name="Feldmann H."/>
            <person name="Gaillon L."/>
            <person name="Galisson F."/>
            <person name="Gamo F.-J."/>
            <person name="Gancedo C."/>
            <person name="Goffeau A."/>
            <person name="Goulding S.E."/>
            <person name="Grivell L.A."/>
            <person name="Habbig B."/>
            <person name="Hand N.J."/>
            <person name="Hani J."/>
            <person name="Hattenhorst U."/>
            <person name="Hebling U."/>
            <person name="Hernando Y."/>
            <person name="Herrero E."/>
            <person name="Heumann K."/>
            <person name="Hiesel R."/>
            <person name="Hilger F."/>
            <person name="Hofmann B."/>
            <person name="Hollenberg C.P."/>
            <person name="Hughes B."/>
            <person name="Jauniaux J.-C."/>
            <person name="Kalogeropoulos A."/>
            <person name="Katsoulou C."/>
            <person name="Kordes E."/>
            <person name="Lafuente M.J."/>
            <person name="Landt O."/>
            <person name="Louis E.J."/>
            <person name="Maarse A.C."/>
            <person name="Madania A."/>
            <person name="Mannhaupt G."/>
            <person name="Marck C."/>
            <person name="Martin R.P."/>
            <person name="Mewes H.-W."/>
            <person name="Michaux G."/>
            <person name="Paces V."/>
            <person name="Parle-McDermott A.G."/>
            <person name="Pearson B.M."/>
            <person name="Perrin A."/>
            <person name="Pettersson B."/>
            <person name="Poch O."/>
            <person name="Pohl T.M."/>
            <person name="Poirey R."/>
            <person name="Portetelle D."/>
            <person name="Pujol A."/>
            <person name="Purnelle B."/>
            <person name="Ramezani Rad M."/>
            <person name="Rechmann S."/>
            <person name="Schwager C."/>
            <person name="Schweizer M."/>
            <person name="Sor F."/>
            <person name="Sterky F."/>
            <person name="Tarassov I.A."/>
            <person name="Teodoru C."/>
            <person name="Tettelin H."/>
            <person name="Thierry A."/>
            <person name="Tobiasch E."/>
            <person name="Tzermia M."/>
            <person name="Uhlen M."/>
            <person name="Unseld M."/>
            <person name="Valens M."/>
            <person name="Vandenbol M."/>
            <person name="Vetter I."/>
            <person name="Vlcek C."/>
            <person name="Voet M."/>
            <person name="Volckaert G."/>
            <person name="Voss H."/>
            <person name="Wambutt R."/>
            <person name="Wedler H."/>
            <person name="Wiemann S."/>
            <person name="Winsor B."/>
            <person name="Wolfe K.H."/>
            <person name="Zollner A."/>
            <person name="Zumstein E."/>
            <person name="Kleine K."/>
        </authorList>
    </citation>
    <scope>NUCLEOTIDE SEQUENCE [LARGE SCALE GENOMIC DNA]</scope>
    <source>
        <strain>ATCC 204508 / S288c</strain>
    </source>
</reference>
<reference key="4">
    <citation type="journal article" date="2014" name="G3 (Bethesda)">
        <title>The reference genome sequence of Saccharomyces cerevisiae: Then and now.</title>
        <authorList>
            <person name="Engel S.R."/>
            <person name="Dietrich F.S."/>
            <person name="Fisk D.G."/>
            <person name="Binkley G."/>
            <person name="Balakrishnan R."/>
            <person name="Costanzo M.C."/>
            <person name="Dwight S.S."/>
            <person name="Hitz B.C."/>
            <person name="Karra K."/>
            <person name="Nash R.S."/>
            <person name="Weng S."/>
            <person name="Wong E.D."/>
            <person name="Lloyd P."/>
            <person name="Skrzypek M.S."/>
            <person name="Miyasato S.R."/>
            <person name="Simison M."/>
            <person name="Cherry J.M."/>
        </authorList>
    </citation>
    <scope>GENOME REANNOTATION</scope>
    <source>
        <strain>ATCC 204508 / S288c</strain>
    </source>
</reference>
<reference key="5">
    <citation type="journal article" date="2007" name="Genome Res.">
        <title>Approaching a complete repository of sequence-verified protein-encoding clones for Saccharomyces cerevisiae.</title>
        <authorList>
            <person name="Hu Y."/>
            <person name="Rolfs A."/>
            <person name="Bhullar B."/>
            <person name="Murthy T.V.S."/>
            <person name="Zhu C."/>
            <person name="Berger M.F."/>
            <person name="Camargo A.A."/>
            <person name="Kelley F."/>
            <person name="McCarron S."/>
            <person name="Jepson D."/>
            <person name="Richardson A."/>
            <person name="Raphael J."/>
            <person name="Moreira D."/>
            <person name="Taycher E."/>
            <person name="Zuo D."/>
            <person name="Mohr S."/>
            <person name="Kane M.F."/>
            <person name="Williamson J."/>
            <person name="Simpson A.J.G."/>
            <person name="Bulyk M.L."/>
            <person name="Harlow E."/>
            <person name="Marsischky G."/>
            <person name="Kolodner R.D."/>
            <person name="LaBaer J."/>
        </authorList>
    </citation>
    <scope>NUCLEOTIDE SEQUENCE [GENOMIC DNA]</scope>
    <source>
        <strain>ATCC 204508 / S288c</strain>
    </source>
</reference>
<reference key="6">
    <citation type="journal article" date="1987" name="J. Biol. Chem.">
        <title>Casein kinase II of yeast contains two distinct alpha polypeptides and an unusually large beta subunit.</title>
        <authorList>
            <person name="Padmanabha R."/>
            <person name="Glover C.V.C."/>
        </authorList>
    </citation>
    <scope>PROTEIN SEQUENCE OF 2-38</scope>
</reference>
<reference key="7">
    <citation type="journal article" date="2002" name="Mol. Cell. Biol.">
        <title>RNA polymerase II elongation factors of Saccharomyces cerevisiae: a targeted proteomics approach.</title>
        <authorList>
            <person name="Krogan N.J."/>
            <person name="Kim M."/>
            <person name="Ahn S.H."/>
            <person name="Zhong G."/>
            <person name="Kobor M.S."/>
            <person name="Cagney G."/>
            <person name="Emili A."/>
            <person name="Shilatifard A."/>
            <person name="Buratowski S."/>
            <person name="Greenblatt J.F."/>
        </authorList>
    </citation>
    <scope>INTERACTION WITH POB3 AND SPT16</scope>
</reference>
<reference key="8">
    <citation type="journal article" date="2003" name="Nature">
        <title>Global analysis of protein expression in yeast.</title>
        <authorList>
            <person name="Ghaemmaghami S."/>
            <person name="Huh W.-K."/>
            <person name="Bower K."/>
            <person name="Howson R.W."/>
            <person name="Belle A."/>
            <person name="Dephoure N."/>
            <person name="O'Shea E.K."/>
            <person name="Weissman J.S."/>
        </authorList>
    </citation>
    <scope>LEVEL OF PROTEIN EXPRESSION [LARGE SCALE ANALYSIS]</scope>
</reference>
<reference key="9">
    <citation type="journal article" date="2008" name="Mol. Cell. Biol.">
        <title>Phosphorylation by casein kinase 2 regulates Nap1 localization and function.</title>
        <authorList>
            <person name="Calvert M.E.K."/>
            <person name="Keck K.M."/>
            <person name="Ptak C."/>
            <person name="Shabanowitz J."/>
            <person name="Hunt D.F."/>
            <person name="Pemberton L.F."/>
        </authorList>
    </citation>
    <scope>INTERACTION WITH NAP1</scope>
    <scope>IDENTIFICATION BY MASS SPECTROMETRY</scope>
</reference>
<reference key="10">
    <citation type="journal article" date="2011" name="Genes Dev.">
        <title>Restriction of histone gene transcription to S phase by phosphorylation of a chromatin boundary protein.</title>
        <authorList>
            <person name="Kurat C.F."/>
            <person name="Lambert J.P."/>
            <person name="van Dyk D."/>
            <person name="Tsui K."/>
            <person name="van Bakel H."/>
            <person name="Kaluarachchi S."/>
            <person name="Friesen H."/>
            <person name="Kainth P."/>
            <person name="Nislow C."/>
            <person name="Figeys D."/>
            <person name="Fillingham J."/>
            <person name="Andrews B.J."/>
        </authorList>
    </citation>
    <scope>FUNCTION</scope>
    <scope>INTERACTION WITH YTA7</scope>
</reference>
<reference key="11">
    <citation type="journal article" date="2012" name="Proc. Natl. Acad. Sci. U.S.A.">
        <title>N-terminal acetylome analyses and functional insights of the N-terminal acetyltransferase NatB.</title>
        <authorList>
            <person name="Van Damme P."/>
            <person name="Lasa M."/>
            <person name="Polevoda B."/>
            <person name="Gazquez C."/>
            <person name="Elosegui-Artola A."/>
            <person name="Kim D.S."/>
            <person name="De Juan-Pardo E."/>
            <person name="Demeyer K."/>
            <person name="Hole K."/>
            <person name="Larrea E."/>
            <person name="Timmerman E."/>
            <person name="Prieto J."/>
            <person name="Arnesen T."/>
            <person name="Sherman F."/>
            <person name="Gevaert K."/>
            <person name="Aldabe R."/>
        </authorList>
    </citation>
    <scope>IDENTIFICATION BY MASS SPECTROMETRY [LARGE SCALE ANALYSIS]</scope>
</reference>
<protein>
    <recommendedName>
        <fullName>Casein kinase II subunit alpha'</fullName>
        <shortName>CK II</shortName>
        <ecNumber evidence="1">2.7.11.1</ecNumber>
    </recommendedName>
</protein>
<comment type="function">
    <text evidence="1 7">Catalytic subunit of a constitutively active serine/threonine-protein kinase complex that phosphorylates a large number of substrates containing acidic residues C-terminal to the phosphorylated serine or threonine (By similarity). Phosphorylates YTA7 during S-phase to promote transcription of histones (PubMed:22156209).</text>
</comment>
<comment type="catalytic activity">
    <reaction evidence="1">
        <text>L-seryl-[protein] + ATP = O-phospho-L-seryl-[protein] + ADP + H(+)</text>
        <dbReference type="Rhea" id="RHEA:17989"/>
        <dbReference type="Rhea" id="RHEA-COMP:9863"/>
        <dbReference type="Rhea" id="RHEA-COMP:11604"/>
        <dbReference type="ChEBI" id="CHEBI:15378"/>
        <dbReference type="ChEBI" id="CHEBI:29999"/>
        <dbReference type="ChEBI" id="CHEBI:30616"/>
        <dbReference type="ChEBI" id="CHEBI:83421"/>
        <dbReference type="ChEBI" id="CHEBI:456216"/>
        <dbReference type="EC" id="2.7.11.1"/>
    </reaction>
</comment>
<comment type="catalytic activity">
    <reaction evidence="1">
        <text>L-threonyl-[protein] + ATP = O-phospho-L-threonyl-[protein] + ADP + H(+)</text>
        <dbReference type="Rhea" id="RHEA:46608"/>
        <dbReference type="Rhea" id="RHEA-COMP:11060"/>
        <dbReference type="Rhea" id="RHEA-COMP:11605"/>
        <dbReference type="ChEBI" id="CHEBI:15378"/>
        <dbReference type="ChEBI" id="CHEBI:30013"/>
        <dbReference type="ChEBI" id="CHEBI:30616"/>
        <dbReference type="ChEBI" id="CHEBI:61977"/>
        <dbReference type="ChEBI" id="CHEBI:456216"/>
        <dbReference type="EC" id="2.7.11.1"/>
    </reaction>
</comment>
<comment type="subunit">
    <text evidence="4 6 7">Tetramer composed of an alpha chain, an alpha', one beta chain and one beta' chain (PubMed:12242279). Interacts with FACT subunits POB3 and SPT16 (PubMed:12242279). Interacts with NAP1 (PubMed:18086883). Interacts with YTA7 (PubMed:22156209).</text>
</comment>
<comment type="interaction">
    <interactant intactId="EBI-9548">
        <id>P19454</id>
    </interactant>
    <interactant intactId="EBI-26778">
        <id>P36076</id>
        <label>CAB3</label>
    </interactant>
    <organismsDiffer>false</organismsDiffer>
    <experiments>3</experiments>
</comment>
<comment type="interaction">
    <interactant intactId="EBI-9548">
        <id>P19454</id>
    </interactant>
    <interactant intactId="EBI-4192">
        <id>Q00684</id>
        <label>CDC14</label>
    </interactant>
    <organismsDiffer>false</organismsDiffer>
    <experiments>3</experiments>
</comment>
<comment type="interaction">
    <interactant intactId="EBI-9548">
        <id>P19454</id>
    </interactant>
    <interactant intactId="EBI-9533">
        <id>P15790</id>
        <label>CKA1</label>
    </interactant>
    <organismsDiffer>false</organismsDiffer>
    <experiments>14</experiments>
</comment>
<comment type="interaction">
    <interactant intactId="EBI-9548">
        <id>P19454</id>
    </interactant>
    <interactant intactId="EBI-9563">
        <id>P43639</id>
        <label>CKB1</label>
    </interactant>
    <organismsDiffer>false</organismsDiffer>
    <experiments>13</experiments>
</comment>
<comment type="interaction">
    <interactant intactId="EBI-9548">
        <id>P19454</id>
    </interactant>
    <interactant intactId="EBI-9578">
        <id>P38930</id>
        <label>CKB2</label>
    </interactant>
    <organismsDiffer>false</organismsDiffer>
    <experiments>12</experiments>
</comment>
<comment type="interaction">
    <interactant intactId="EBI-9548">
        <id>P19454</id>
    </interactant>
    <interactant intactId="EBI-31630">
        <id>Q06070</id>
        <label>YLR407W</label>
    </interactant>
    <organismsDiffer>false</organismsDiffer>
    <experiments>4</experiments>
</comment>
<comment type="miscellaneous">
    <text evidence="5">Present with 4540 molecules/cell in log phase SD medium.</text>
</comment>
<comment type="similarity">
    <text evidence="2">Belongs to the protein kinase superfamily. Ser/Thr protein kinase family. CK2 subfamily.</text>
</comment>
<accession>P19454</accession>
<accession>D6W2C4</accession>
<evidence type="ECO:0000250" key="1">
    <source>
        <dbReference type="UniProtKB" id="P68400"/>
    </source>
</evidence>
<evidence type="ECO:0000255" key="2">
    <source>
        <dbReference type="PROSITE-ProRule" id="PRU00159"/>
    </source>
</evidence>
<evidence type="ECO:0000255" key="3">
    <source>
        <dbReference type="PROSITE-ProRule" id="PRU10027"/>
    </source>
</evidence>
<evidence type="ECO:0000269" key="4">
    <source>
    </source>
</evidence>
<evidence type="ECO:0000269" key="5">
    <source>
    </source>
</evidence>
<evidence type="ECO:0000269" key="6">
    <source>
    </source>
</evidence>
<evidence type="ECO:0000269" key="7">
    <source>
    </source>
</evidence>
<evidence type="ECO:0000269" key="8">
    <source>
    </source>
</evidence>
<evidence type="ECO:0000303" key="9">
    <source>
    </source>
</evidence>
<dbReference type="EC" id="2.7.11.1" evidence="1"/>
<dbReference type="EMBL" id="M33759">
    <property type="protein sequence ID" value="AAA34500.1"/>
    <property type="molecule type" value="Genomic_DNA"/>
</dbReference>
<dbReference type="EMBL" id="Z74969">
    <property type="protein sequence ID" value="CAA99254.1"/>
    <property type="molecule type" value="Genomic_DNA"/>
</dbReference>
<dbReference type="EMBL" id="Z70678">
    <property type="protein sequence ID" value="CAA94546.1"/>
    <property type="molecule type" value="Genomic_DNA"/>
</dbReference>
<dbReference type="EMBL" id="AY723867">
    <property type="protein sequence ID" value="AAU09784.1"/>
    <property type="molecule type" value="Genomic_DNA"/>
</dbReference>
<dbReference type="EMBL" id="BK006948">
    <property type="protein sequence ID" value="DAA10840.1"/>
    <property type="molecule type" value="Genomic_DNA"/>
</dbReference>
<dbReference type="PIR" id="S11192">
    <property type="entry name" value="TVBY2A"/>
</dbReference>
<dbReference type="RefSeq" id="NP_014704.1">
    <property type="nucleotide sequence ID" value="NM_001183480.1"/>
</dbReference>
<dbReference type="SMR" id="P19454"/>
<dbReference type="BioGRID" id="34460">
    <property type="interactions" value="442"/>
</dbReference>
<dbReference type="ComplexPortal" id="CPX-581">
    <property type="entry name" value="Casein kinase II complex, CKA1-CKA2 variant"/>
</dbReference>
<dbReference type="ComplexPortal" id="CPX-770">
    <property type="entry name" value="Casein kinase II complex, CKA2 variant"/>
</dbReference>
<dbReference type="ComplexPortal" id="CPX-772">
    <property type="entry name" value="UTP-C complex variant 1"/>
</dbReference>
<dbReference type="ComplexPortal" id="CPX-773">
    <property type="entry name" value="UTP-C complex variant 3"/>
</dbReference>
<dbReference type="ComplexPortal" id="CPX-774">
    <property type="entry name" value="CURI complex variant 1"/>
</dbReference>
<dbReference type="ComplexPortal" id="CPX-776">
    <property type="entry name" value="CURI complex variant 3"/>
</dbReference>
<dbReference type="DIP" id="DIP-1038N"/>
<dbReference type="FunCoup" id="P19454">
    <property type="interactions" value="1077"/>
</dbReference>
<dbReference type="IntAct" id="P19454">
    <property type="interactions" value="123"/>
</dbReference>
<dbReference type="MINT" id="P19454"/>
<dbReference type="STRING" id="4932.YOR061W"/>
<dbReference type="iPTMnet" id="P19454"/>
<dbReference type="PaxDb" id="4932-YOR061W"/>
<dbReference type="PeptideAtlas" id="P19454"/>
<dbReference type="EnsemblFungi" id="YOR061W_mRNA">
    <property type="protein sequence ID" value="YOR061W"/>
    <property type="gene ID" value="YOR061W"/>
</dbReference>
<dbReference type="GeneID" id="854227"/>
<dbReference type="KEGG" id="sce:YOR061W"/>
<dbReference type="AGR" id="SGD:S000005587"/>
<dbReference type="SGD" id="S000005587">
    <property type="gene designation" value="CKA2"/>
</dbReference>
<dbReference type="VEuPathDB" id="FungiDB:YOR061W"/>
<dbReference type="eggNOG" id="KOG0668">
    <property type="taxonomic scope" value="Eukaryota"/>
</dbReference>
<dbReference type="GeneTree" id="ENSGT00390000004215"/>
<dbReference type="HOGENOM" id="CLU_000288_70_4_1"/>
<dbReference type="InParanoid" id="P19454"/>
<dbReference type="OMA" id="ACEKRPQ"/>
<dbReference type="OrthoDB" id="10254671at2759"/>
<dbReference type="BioCyc" id="YEAST:G3O-33601-MONOMER"/>
<dbReference type="BRENDA" id="2.7.11.1">
    <property type="organism ID" value="984"/>
</dbReference>
<dbReference type="Reactome" id="R-SCE-2514853">
    <property type="pathway name" value="Condensation of Prometaphase Chromosomes"/>
</dbReference>
<dbReference type="Reactome" id="R-SCE-6804756">
    <property type="pathway name" value="Regulation of TP53 Activity through Phosphorylation"/>
</dbReference>
<dbReference type="Reactome" id="R-SCE-8934903">
    <property type="pathway name" value="Receptor Mediated Mitophagy"/>
</dbReference>
<dbReference type="Reactome" id="R-SCE-8948751">
    <property type="pathway name" value="Regulation of PTEN stability and activity"/>
</dbReference>
<dbReference type="BioGRID-ORCS" id="854227">
    <property type="hits" value="5 hits in 13 CRISPR screens"/>
</dbReference>
<dbReference type="PRO" id="PR:P19454"/>
<dbReference type="Proteomes" id="UP000002311">
    <property type="component" value="Chromosome XV"/>
</dbReference>
<dbReference type="RNAct" id="P19454">
    <property type="molecule type" value="protein"/>
</dbReference>
<dbReference type="GO" id="GO:0032545">
    <property type="term" value="C:CURI complex"/>
    <property type="evidence" value="ECO:0000353"/>
    <property type="project" value="ComplexPortal"/>
</dbReference>
<dbReference type="GO" id="GO:0005829">
    <property type="term" value="C:cytosol"/>
    <property type="evidence" value="ECO:0000318"/>
    <property type="project" value="GO_Central"/>
</dbReference>
<dbReference type="GO" id="GO:0005730">
    <property type="term" value="C:nucleolus"/>
    <property type="evidence" value="ECO:0000314"/>
    <property type="project" value="ComplexPortal"/>
</dbReference>
<dbReference type="GO" id="GO:0005654">
    <property type="term" value="C:nucleoplasm"/>
    <property type="evidence" value="ECO:0000304"/>
    <property type="project" value="Reactome"/>
</dbReference>
<dbReference type="GO" id="GO:0005634">
    <property type="term" value="C:nucleus"/>
    <property type="evidence" value="ECO:0000318"/>
    <property type="project" value="GO_Central"/>
</dbReference>
<dbReference type="GO" id="GO:0005956">
    <property type="term" value="C:protein kinase CK2 complex"/>
    <property type="evidence" value="ECO:0000314"/>
    <property type="project" value="SGD"/>
</dbReference>
<dbReference type="GO" id="GO:0032040">
    <property type="term" value="C:small-subunit processome"/>
    <property type="evidence" value="ECO:0000353"/>
    <property type="project" value="ComplexPortal"/>
</dbReference>
<dbReference type="GO" id="GO:0034456">
    <property type="term" value="C:UTP-C complex"/>
    <property type="evidence" value="ECO:0000314"/>
    <property type="project" value="SGD"/>
</dbReference>
<dbReference type="GO" id="GO:0005524">
    <property type="term" value="F:ATP binding"/>
    <property type="evidence" value="ECO:0007669"/>
    <property type="project" value="UniProtKB-KW"/>
</dbReference>
<dbReference type="GO" id="GO:0106310">
    <property type="term" value="F:protein serine kinase activity"/>
    <property type="evidence" value="ECO:0007669"/>
    <property type="project" value="RHEA"/>
</dbReference>
<dbReference type="GO" id="GO:0004674">
    <property type="term" value="F:protein serine/threonine kinase activity"/>
    <property type="evidence" value="ECO:0000314"/>
    <property type="project" value="SGD"/>
</dbReference>
<dbReference type="GO" id="GO:0006974">
    <property type="term" value="P:DNA damage response"/>
    <property type="evidence" value="ECO:0000314"/>
    <property type="project" value="SGD"/>
</dbReference>
<dbReference type="GO" id="GO:0007535">
    <property type="term" value="P:donor selection"/>
    <property type="evidence" value="ECO:0000316"/>
    <property type="project" value="SGD"/>
</dbReference>
<dbReference type="GO" id="GO:0030490">
    <property type="term" value="P:maturation of SSU-rRNA"/>
    <property type="evidence" value="ECO:0000303"/>
    <property type="project" value="ComplexPortal"/>
</dbReference>
<dbReference type="GO" id="GO:0042790">
    <property type="term" value="P:nucleolar large rRNA transcription by RNA polymerase I"/>
    <property type="evidence" value="ECO:0000314"/>
    <property type="project" value="ComplexPortal"/>
</dbReference>
<dbReference type="GO" id="GO:0051726">
    <property type="term" value="P:regulation of cell cycle"/>
    <property type="evidence" value="ECO:0000314"/>
    <property type="project" value="ComplexPortal"/>
</dbReference>
<dbReference type="GO" id="GO:0060962">
    <property type="term" value="P:regulation of ribosomal protein gene transcription by RNA polymerase II"/>
    <property type="evidence" value="ECO:0000314"/>
    <property type="project" value="ComplexPortal"/>
</dbReference>
<dbReference type="GO" id="GO:0006356">
    <property type="term" value="P:regulation of transcription by RNA polymerase I"/>
    <property type="evidence" value="ECO:0000314"/>
    <property type="project" value="SGD"/>
</dbReference>
<dbReference type="GO" id="GO:0006359">
    <property type="term" value="P:regulation of transcription by RNA polymerase III"/>
    <property type="evidence" value="ECO:0000314"/>
    <property type="project" value="SGD"/>
</dbReference>
<dbReference type="GO" id="GO:0000028">
    <property type="term" value="P:ribosomal small subunit assembly"/>
    <property type="evidence" value="ECO:0000303"/>
    <property type="project" value="ComplexPortal"/>
</dbReference>
<dbReference type="CDD" id="cd14132">
    <property type="entry name" value="STKc_CK2_alpha"/>
    <property type="match status" value="1"/>
</dbReference>
<dbReference type="FunFam" id="1.10.510.10:FF:000459">
    <property type="entry name" value="Casein kinase II subunit alpha"/>
    <property type="match status" value="1"/>
</dbReference>
<dbReference type="FunFam" id="3.30.200.20:FF:000088">
    <property type="entry name" value="Casein kinase II subunit alpha"/>
    <property type="match status" value="1"/>
</dbReference>
<dbReference type="Gene3D" id="3.30.200.20">
    <property type="entry name" value="Phosphorylase Kinase, domain 1"/>
    <property type="match status" value="1"/>
</dbReference>
<dbReference type="Gene3D" id="1.10.510.10">
    <property type="entry name" value="Transferase(Phosphotransferase) domain 1"/>
    <property type="match status" value="1"/>
</dbReference>
<dbReference type="InterPro" id="IPR045216">
    <property type="entry name" value="CK2_alpha"/>
</dbReference>
<dbReference type="InterPro" id="IPR011009">
    <property type="entry name" value="Kinase-like_dom_sf"/>
</dbReference>
<dbReference type="InterPro" id="IPR000719">
    <property type="entry name" value="Prot_kinase_dom"/>
</dbReference>
<dbReference type="InterPro" id="IPR017441">
    <property type="entry name" value="Protein_kinase_ATP_BS"/>
</dbReference>
<dbReference type="InterPro" id="IPR008271">
    <property type="entry name" value="Ser/Thr_kinase_AS"/>
</dbReference>
<dbReference type="PANTHER" id="PTHR24054">
    <property type="entry name" value="CASEIN KINASE II SUBUNIT ALPHA"/>
    <property type="match status" value="1"/>
</dbReference>
<dbReference type="PANTHER" id="PTHR24054:SF27">
    <property type="entry name" value="CASEIN KINASE II SUBUNIT ALPHA"/>
    <property type="match status" value="1"/>
</dbReference>
<dbReference type="Pfam" id="PF00069">
    <property type="entry name" value="Pkinase"/>
    <property type="match status" value="1"/>
</dbReference>
<dbReference type="SMART" id="SM00220">
    <property type="entry name" value="S_TKc"/>
    <property type="match status" value="1"/>
</dbReference>
<dbReference type="SUPFAM" id="SSF56112">
    <property type="entry name" value="Protein kinase-like (PK-like)"/>
    <property type="match status" value="1"/>
</dbReference>
<dbReference type="PROSITE" id="PS00107">
    <property type="entry name" value="PROTEIN_KINASE_ATP"/>
    <property type="match status" value="1"/>
</dbReference>
<dbReference type="PROSITE" id="PS50011">
    <property type="entry name" value="PROTEIN_KINASE_DOM"/>
    <property type="match status" value="1"/>
</dbReference>
<dbReference type="PROSITE" id="PS00108">
    <property type="entry name" value="PROTEIN_KINASE_ST"/>
    <property type="match status" value="1"/>
</dbReference>
<gene>
    <name evidence="9" type="primary">CKA2</name>
    <name type="ordered locus">YOR061W</name>
    <name type="ORF">YOR29-12</name>
</gene>
<keyword id="KW-0067">ATP-binding</keyword>
<keyword id="KW-0903">Direct protein sequencing</keyword>
<keyword id="KW-0418">Kinase</keyword>
<keyword id="KW-0547">Nucleotide-binding</keyword>
<keyword id="KW-1185">Reference proteome</keyword>
<keyword id="KW-0723">Serine/threonine-protein kinase</keyword>
<keyword id="KW-0808">Transferase</keyword>
<proteinExistence type="evidence at protein level"/>
<name>CSK22_YEAST</name>
<organism>
    <name type="scientific">Saccharomyces cerevisiae (strain ATCC 204508 / S288c)</name>
    <name type="common">Baker's yeast</name>
    <dbReference type="NCBI Taxonomy" id="559292"/>
    <lineage>
        <taxon>Eukaryota</taxon>
        <taxon>Fungi</taxon>
        <taxon>Dikarya</taxon>
        <taxon>Ascomycota</taxon>
        <taxon>Saccharomycotina</taxon>
        <taxon>Saccharomycetes</taxon>
        <taxon>Saccharomycetales</taxon>
        <taxon>Saccharomycetaceae</taxon>
        <taxon>Saccharomyces</taxon>
    </lineage>
</organism>